<comment type="function">
    <text evidence="1">IGPS catalyzes the conversion of PRFAR and glutamine to IGP, AICAR and glutamate. The HisF subunit catalyzes the cyclization activity that produces IGP and AICAR from PRFAR using the ammonia provided by the HisH subunit.</text>
</comment>
<comment type="catalytic activity">
    <reaction evidence="1">
        <text>5-[(5-phospho-1-deoxy-D-ribulos-1-ylimino)methylamino]-1-(5-phospho-beta-D-ribosyl)imidazole-4-carboxamide + L-glutamine = D-erythro-1-(imidazol-4-yl)glycerol 3-phosphate + 5-amino-1-(5-phospho-beta-D-ribosyl)imidazole-4-carboxamide + L-glutamate + H(+)</text>
        <dbReference type="Rhea" id="RHEA:24793"/>
        <dbReference type="ChEBI" id="CHEBI:15378"/>
        <dbReference type="ChEBI" id="CHEBI:29985"/>
        <dbReference type="ChEBI" id="CHEBI:58278"/>
        <dbReference type="ChEBI" id="CHEBI:58359"/>
        <dbReference type="ChEBI" id="CHEBI:58475"/>
        <dbReference type="ChEBI" id="CHEBI:58525"/>
        <dbReference type="EC" id="4.3.2.10"/>
    </reaction>
</comment>
<comment type="pathway">
    <text evidence="1">Amino-acid biosynthesis; L-histidine biosynthesis; L-histidine from 5-phospho-alpha-D-ribose 1-diphosphate: step 5/9.</text>
</comment>
<comment type="subunit">
    <text evidence="1 2">Heterodimer of HisH and HisF.</text>
</comment>
<comment type="subcellular location">
    <subcellularLocation>
        <location evidence="1">Cytoplasm</location>
    </subcellularLocation>
</comment>
<comment type="similarity">
    <text evidence="1">Belongs to the HisA/HisF family.</text>
</comment>
<accession>Q7SIB9</accession>
<accession>Q5SID0</accession>
<proteinExistence type="evidence at protein level"/>
<evidence type="ECO:0000255" key="1">
    <source>
        <dbReference type="HAMAP-Rule" id="MF_01013"/>
    </source>
</evidence>
<evidence type="ECO:0000269" key="2">
    <source>
    </source>
</evidence>
<evidence type="ECO:0007829" key="3">
    <source>
        <dbReference type="PDB" id="1KA9"/>
    </source>
</evidence>
<name>HIS6_THET8</name>
<keyword id="KW-0002">3D-structure</keyword>
<keyword id="KW-0028">Amino-acid biosynthesis</keyword>
<keyword id="KW-0963">Cytoplasm</keyword>
<keyword id="KW-0368">Histidine biosynthesis</keyword>
<keyword id="KW-0456">Lyase</keyword>
<keyword id="KW-1185">Reference proteome</keyword>
<dbReference type="EC" id="4.3.2.10" evidence="1"/>
<dbReference type="EMBL" id="AP008226">
    <property type="protein sequence ID" value="BAD71267.1"/>
    <property type="molecule type" value="Genomic_DNA"/>
</dbReference>
<dbReference type="RefSeq" id="WP_011228686.1">
    <property type="nucleotide sequence ID" value="NC_006461.1"/>
</dbReference>
<dbReference type="RefSeq" id="YP_144710.1">
    <property type="nucleotide sequence ID" value="NC_006461.1"/>
</dbReference>
<dbReference type="PDB" id="1KA9">
    <property type="method" value="X-ray"/>
    <property type="resolution" value="2.30 A"/>
    <property type="chains" value="F=1-252"/>
</dbReference>
<dbReference type="PDBsum" id="1KA9"/>
<dbReference type="SMR" id="Q7SIB9"/>
<dbReference type="IntAct" id="Q7SIB9">
    <property type="interactions" value="1"/>
</dbReference>
<dbReference type="EnsemblBacteria" id="BAD71267">
    <property type="protein sequence ID" value="BAD71267"/>
    <property type="gene ID" value="BAD71267"/>
</dbReference>
<dbReference type="GeneID" id="3168672"/>
<dbReference type="KEGG" id="ttj:TTHA1444"/>
<dbReference type="PATRIC" id="fig|300852.9.peg.1418"/>
<dbReference type="eggNOG" id="COG0107">
    <property type="taxonomic scope" value="Bacteria"/>
</dbReference>
<dbReference type="HOGENOM" id="CLU_048577_4_0_0"/>
<dbReference type="PhylomeDB" id="Q7SIB9"/>
<dbReference type="BRENDA" id="4.3.2.10">
    <property type="organism ID" value="2305"/>
</dbReference>
<dbReference type="UniPathway" id="UPA00031">
    <property type="reaction ID" value="UER00010"/>
</dbReference>
<dbReference type="EvolutionaryTrace" id="Q7SIB9"/>
<dbReference type="Proteomes" id="UP000000532">
    <property type="component" value="Chromosome"/>
</dbReference>
<dbReference type="GO" id="GO:0005737">
    <property type="term" value="C:cytoplasm"/>
    <property type="evidence" value="ECO:0007669"/>
    <property type="project" value="UniProtKB-SubCell"/>
</dbReference>
<dbReference type="GO" id="GO:0000107">
    <property type="term" value="F:imidazoleglycerol-phosphate synthase activity"/>
    <property type="evidence" value="ECO:0007669"/>
    <property type="project" value="UniProtKB-UniRule"/>
</dbReference>
<dbReference type="GO" id="GO:0016829">
    <property type="term" value="F:lyase activity"/>
    <property type="evidence" value="ECO:0007669"/>
    <property type="project" value="UniProtKB-KW"/>
</dbReference>
<dbReference type="GO" id="GO:0000105">
    <property type="term" value="P:L-histidine biosynthetic process"/>
    <property type="evidence" value="ECO:0007669"/>
    <property type="project" value="UniProtKB-UniRule"/>
</dbReference>
<dbReference type="CDD" id="cd04731">
    <property type="entry name" value="HisF"/>
    <property type="match status" value="1"/>
</dbReference>
<dbReference type="FunFam" id="3.20.20.70:FF:000006">
    <property type="entry name" value="Imidazole glycerol phosphate synthase subunit HisF"/>
    <property type="match status" value="1"/>
</dbReference>
<dbReference type="Gene3D" id="3.20.20.70">
    <property type="entry name" value="Aldolase class I"/>
    <property type="match status" value="1"/>
</dbReference>
<dbReference type="HAMAP" id="MF_01013">
    <property type="entry name" value="HisF"/>
    <property type="match status" value="1"/>
</dbReference>
<dbReference type="InterPro" id="IPR013785">
    <property type="entry name" value="Aldolase_TIM"/>
</dbReference>
<dbReference type="InterPro" id="IPR006062">
    <property type="entry name" value="His_biosynth"/>
</dbReference>
<dbReference type="InterPro" id="IPR004651">
    <property type="entry name" value="HisF"/>
</dbReference>
<dbReference type="InterPro" id="IPR050064">
    <property type="entry name" value="IGPS_HisA/HisF"/>
</dbReference>
<dbReference type="InterPro" id="IPR011060">
    <property type="entry name" value="RibuloseP-bd_barrel"/>
</dbReference>
<dbReference type="NCBIfam" id="TIGR00735">
    <property type="entry name" value="hisF"/>
    <property type="match status" value="1"/>
</dbReference>
<dbReference type="PANTHER" id="PTHR21235:SF2">
    <property type="entry name" value="IMIDAZOLE GLYCEROL PHOSPHATE SYNTHASE HISHF"/>
    <property type="match status" value="1"/>
</dbReference>
<dbReference type="PANTHER" id="PTHR21235">
    <property type="entry name" value="IMIDAZOLE GLYCEROL PHOSPHATE SYNTHASE SUBUNIT HISF/H IGP SYNTHASE SUBUNIT HISF/H"/>
    <property type="match status" value="1"/>
</dbReference>
<dbReference type="Pfam" id="PF00977">
    <property type="entry name" value="His_biosynth"/>
    <property type="match status" value="1"/>
</dbReference>
<dbReference type="SUPFAM" id="SSF51366">
    <property type="entry name" value="Ribulose-phoshate binding barrel"/>
    <property type="match status" value="1"/>
</dbReference>
<feature type="chain" id="PRO_0000142255" description="Imidazole glycerol phosphate synthase subunit HisF">
    <location>
        <begin position="1"/>
        <end position="252"/>
    </location>
</feature>
<feature type="active site" evidence="1">
    <location>
        <position position="12"/>
    </location>
</feature>
<feature type="active site" evidence="1">
    <location>
        <position position="131"/>
    </location>
</feature>
<feature type="strand" evidence="3">
    <location>
        <begin position="5"/>
        <end position="14"/>
    </location>
</feature>
<feature type="helix" evidence="3">
    <location>
        <begin position="33"/>
        <end position="43"/>
    </location>
</feature>
<feature type="strand" evidence="3">
    <location>
        <begin position="48"/>
        <end position="52"/>
    </location>
</feature>
<feature type="helix" evidence="3">
    <location>
        <begin position="60"/>
        <end position="71"/>
    </location>
</feature>
<feature type="strand" evidence="3">
    <location>
        <begin position="78"/>
        <end position="83"/>
    </location>
</feature>
<feature type="helix" evidence="3">
    <location>
        <begin position="87"/>
        <end position="96"/>
    </location>
</feature>
<feature type="strand" evidence="3">
    <location>
        <begin position="99"/>
        <end position="103"/>
    </location>
</feature>
<feature type="helix" evidence="3">
    <location>
        <begin position="105"/>
        <end position="109"/>
    </location>
</feature>
<feature type="helix" evidence="3">
    <location>
        <begin position="112"/>
        <end position="121"/>
    </location>
</feature>
<feature type="helix" evidence="3">
    <location>
        <begin position="123"/>
        <end position="125"/>
    </location>
</feature>
<feature type="strand" evidence="3">
    <location>
        <begin position="126"/>
        <end position="135"/>
    </location>
</feature>
<feature type="strand" evidence="3">
    <location>
        <begin position="138"/>
        <end position="143"/>
    </location>
</feature>
<feature type="turn" evidence="3">
    <location>
        <begin position="144"/>
        <end position="147"/>
    </location>
</feature>
<feature type="strand" evidence="3">
    <location>
        <begin position="148"/>
        <end position="153"/>
    </location>
</feature>
<feature type="helix" evidence="3">
    <location>
        <begin position="154"/>
        <end position="164"/>
    </location>
</feature>
<feature type="strand" evidence="3">
    <location>
        <begin position="168"/>
        <end position="173"/>
    </location>
</feature>
<feature type="turn" evidence="3">
    <location>
        <begin position="174"/>
        <end position="179"/>
    </location>
</feature>
<feature type="helix" evidence="3">
    <location>
        <begin position="185"/>
        <end position="194"/>
    </location>
</feature>
<feature type="strand" evidence="3">
    <location>
        <begin position="199"/>
        <end position="203"/>
    </location>
</feature>
<feature type="helix" evidence="3">
    <location>
        <begin position="208"/>
        <end position="216"/>
    </location>
</feature>
<feature type="strand" evidence="3">
    <location>
        <begin position="220"/>
        <end position="225"/>
    </location>
</feature>
<feature type="helix" evidence="3">
    <location>
        <begin position="226"/>
        <end position="229"/>
    </location>
</feature>
<feature type="helix" evidence="3">
    <location>
        <begin position="235"/>
        <end position="244"/>
    </location>
</feature>
<gene>
    <name evidence="1" type="primary">hisF</name>
    <name type="ordered locus">TTHA1444</name>
</gene>
<protein>
    <recommendedName>
        <fullName evidence="1">Imidazole glycerol phosphate synthase subunit HisF</fullName>
        <ecNumber evidence="1">4.3.2.10</ecNumber>
    </recommendedName>
    <alternativeName>
        <fullName evidence="1">IGP synthase cyclase subunit</fullName>
    </alternativeName>
    <alternativeName>
        <fullName evidence="1">IGP synthase subunit HisF</fullName>
    </alternativeName>
    <alternativeName>
        <fullName evidence="1">ImGP synthase subunit HisF</fullName>
        <shortName evidence="1">IGPS subunit HisF</shortName>
    </alternativeName>
</protein>
<sequence>MSLAKRIVPCLDVHAGRVVKGVNFVNLRDAGDPVEAARAYDEAGADELVFLDISATHEERAILLDVVARVAERVFIPLTVGGGVRSLEDARKLLLSGADKVSVNSAAVRRPELIRELADHFGAQAVVLAIDARWRGDFPEVHVAGGRVPTGLHAVEWAVKGVELGAGEILLTSMDRDGTKEGYDLRLTRMVAEAVGVPVIASGGAGRMEHFLEAFQAGAEAALAASVFHFGEIPIPKLKRYLAEKGVHVRLD</sequence>
<reference key="1">
    <citation type="submission" date="2004-11" db="EMBL/GenBank/DDBJ databases">
        <title>Complete genome sequence of Thermus thermophilus HB8.</title>
        <authorList>
            <person name="Masui R."/>
            <person name="Kurokawa K."/>
            <person name="Nakagawa N."/>
            <person name="Tokunaga F."/>
            <person name="Koyama Y."/>
            <person name="Shibata T."/>
            <person name="Oshima T."/>
            <person name="Yokoyama S."/>
            <person name="Yasunaga T."/>
            <person name="Kuramitsu S."/>
        </authorList>
    </citation>
    <scope>NUCLEOTIDE SEQUENCE [LARGE SCALE GENOMIC DNA]</scope>
    <source>
        <strain>ATCC 27634 / DSM 579 / HB8</strain>
    </source>
</reference>
<reference key="2">
    <citation type="journal article" date="2002" name="J. Biochem.">
        <title>Structure of imidazole glycerol phosphate synthase from Thermus thermophilus HB8: open-closed conformational change and ammonia tunneling.</title>
        <authorList>
            <person name="Omi R."/>
            <person name="Mizuguchi H."/>
            <person name="Goto M."/>
            <person name="Miyahara I."/>
            <person name="Hayashi H."/>
            <person name="Kagamiyama H."/>
            <person name="Hirotsu K."/>
        </authorList>
    </citation>
    <scope>X-RAY CRYSTALLOGRAPHY (2.3 ANGSTROMS) IN COMPLEX WITH HISH</scope>
</reference>
<organism>
    <name type="scientific">Thermus thermophilus (strain ATCC 27634 / DSM 579 / HB8)</name>
    <dbReference type="NCBI Taxonomy" id="300852"/>
    <lineage>
        <taxon>Bacteria</taxon>
        <taxon>Thermotogati</taxon>
        <taxon>Deinococcota</taxon>
        <taxon>Deinococci</taxon>
        <taxon>Thermales</taxon>
        <taxon>Thermaceae</taxon>
        <taxon>Thermus</taxon>
    </lineage>
</organism>